<sequence>MLFKSFVTFTVLANALAAPLAHQHHQHKEEKRAVHVVTTTNVVVVTIGNGDQTTTFAAPSVAAESSVSVSVNTEPPQNHPTTTQDVASASTYPSSTDGSAASSSAAASSSSQAGSEPSGGVGSGGAKGITYSPYSDNGGCKSESQIASEIAQLSGFDVIRLYGVDCSQVEAVLKAKTSSQKIFAGIFDVSSITSGIESLAEAVKSCGSWDDIYTVSIGNELVNAGSATPSQIKAYVEEGRKALKAAGYTGPVVSVDTFIAVINNPDLCDYSDYMAVNAHAFFDGHVVAENSGAWVLQQIQRVWTACGGKKNVLITETGWPSRGDSNGVAVPSKSNQQAAISSIKSSCGASAILFTAFNDLWKADGPYNAEKYWGIYSN</sequence>
<dbReference type="EC" id="3.2.1.-"/>
<dbReference type="EMBL" id="CP017624">
    <property type="protein sequence ID" value="AOW27981.1"/>
    <property type="molecule type" value="Genomic_DNA"/>
</dbReference>
<dbReference type="RefSeq" id="XP_714424.2">
    <property type="nucleotide sequence ID" value="XM_709331.2"/>
</dbReference>
<dbReference type="SMR" id="Q59XX2"/>
<dbReference type="BioGRID" id="1227045">
    <property type="interactions" value="2"/>
</dbReference>
<dbReference type="FunCoup" id="Q59XX2">
    <property type="interactions" value="130"/>
</dbReference>
<dbReference type="STRING" id="237561.Q59XX2"/>
<dbReference type="EnsemblFungi" id="C2_10030C_A-T">
    <property type="protein sequence ID" value="C2_10030C_A-T-p1"/>
    <property type="gene ID" value="C2_10030C_A"/>
</dbReference>
<dbReference type="GeneID" id="3643951"/>
<dbReference type="KEGG" id="cal:CAALFM_C210030CA"/>
<dbReference type="CGD" id="CAL0000177294">
    <property type="gene designation" value="MP65"/>
</dbReference>
<dbReference type="VEuPathDB" id="FungiDB:C2_10030C_A"/>
<dbReference type="eggNOG" id="ENOG502QTKT">
    <property type="taxonomic scope" value="Eukaryota"/>
</dbReference>
<dbReference type="HOGENOM" id="CLU_2236255_0_0_1"/>
<dbReference type="InParanoid" id="Q59XX2"/>
<dbReference type="OrthoDB" id="941679at2759"/>
<dbReference type="PRO" id="PR:Q59XX2"/>
<dbReference type="Proteomes" id="UP000000559">
    <property type="component" value="Chromosome 2"/>
</dbReference>
<dbReference type="GO" id="GO:0009986">
    <property type="term" value="C:cell surface"/>
    <property type="evidence" value="ECO:0000314"/>
    <property type="project" value="CGD"/>
</dbReference>
<dbReference type="GO" id="GO:0005576">
    <property type="term" value="C:extracellular region"/>
    <property type="evidence" value="ECO:0000314"/>
    <property type="project" value="CGD"/>
</dbReference>
<dbReference type="GO" id="GO:1903561">
    <property type="term" value="C:extracellular vesicle"/>
    <property type="evidence" value="ECO:0000314"/>
    <property type="project" value="CGD"/>
</dbReference>
<dbReference type="GO" id="GO:0009277">
    <property type="term" value="C:fungal-type cell wall"/>
    <property type="evidence" value="ECO:0000314"/>
    <property type="project" value="CGD"/>
</dbReference>
<dbReference type="GO" id="GO:0030446">
    <property type="term" value="C:hyphal cell wall"/>
    <property type="evidence" value="ECO:0000314"/>
    <property type="project" value="CGD"/>
</dbReference>
<dbReference type="GO" id="GO:0030445">
    <property type="term" value="C:yeast-form cell wall"/>
    <property type="evidence" value="ECO:0000314"/>
    <property type="project" value="CGD"/>
</dbReference>
<dbReference type="GO" id="GO:0042973">
    <property type="term" value="F:glucan endo-1,3-beta-D-glucosidase activity"/>
    <property type="evidence" value="ECO:0000318"/>
    <property type="project" value="GO_Central"/>
</dbReference>
<dbReference type="GO" id="GO:0005975">
    <property type="term" value="P:carbohydrate metabolic process"/>
    <property type="evidence" value="ECO:0007669"/>
    <property type="project" value="InterPro"/>
</dbReference>
<dbReference type="GO" id="GO:0007155">
    <property type="term" value="P:cell adhesion"/>
    <property type="evidence" value="ECO:0000315"/>
    <property type="project" value="CGD"/>
</dbReference>
<dbReference type="GO" id="GO:0043709">
    <property type="term" value="P:cell adhesion involved in single-species biofilm formation"/>
    <property type="evidence" value="ECO:0000315"/>
    <property type="project" value="CGD"/>
</dbReference>
<dbReference type="GO" id="GO:0071555">
    <property type="term" value="P:cell wall organization"/>
    <property type="evidence" value="ECO:0000318"/>
    <property type="project" value="GO_Central"/>
</dbReference>
<dbReference type="GO" id="GO:0031589">
    <property type="term" value="P:cell-substrate adhesion"/>
    <property type="evidence" value="ECO:0000315"/>
    <property type="project" value="CGD"/>
</dbReference>
<dbReference type="GO" id="GO:0042149">
    <property type="term" value="P:cellular response to glucose starvation"/>
    <property type="evidence" value="ECO:0000315"/>
    <property type="project" value="CGD"/>
</dbReference>
<dbReference type="GO" id="GO:0036244">
    <property type="term" value="P:cellular response to neutral pH"/>
    <property type="evidence" value="ECO:0000315"/>
    <property type="project" value="CGD"/>
</dbReference>
<dbReference type="GO" id="GO:0030447">
    <property type="term" value="P:filamentous growth"/>
    <property type="evidence" value="ECO:0000315"/>
    <property type="project" value="CGD"/>
</dbReference>
<dbReference type="GO" id="GO:0036178">
    <property type="term" value="P:filamentous growth of a population of unicellular organisms in response to neutral pH"/>
    <property type="evidence" value="ECO:0000315"/>
    <property type="project" value="CGD"/>
</dbReference>
<dbReference type="GO" id="GO:0036170">
    <property type="term" value="P:filamentous growth of a population of unicellular organisms in response to starvation"/>
    <property type="evidence" value="ECO:0000315"/>
    <property type="project" value="CGD"/>
</dbReference>
<dbReference type="GO" id="GO:0052553">
    <property type="term" value="P:symbiont-mediated perturbation of host immune response"/>
    <property type="evidence" value="ECO:0000314"/>
    <property type="project" value="CGD"/>
</dbReference>
<dbReference type="FunFam" id="3.20.20.80:FF:000111">
    <property type="entry name" value="Soluble cell wall protein"/>
    <property type="match status" value="1"/>
</dbReference>
<dbReference type="Gene3D" id="3.20.20.80">
    <property type="entry name" value="Glycosidases"/>
    <property type="match status" value="1"/>
</dbReference>
<dbReference type="InterPro" id="IPR050732">
    <property type="entry name" value="Beta-glucan_modifiers"/>
</dbReference>
<dbReference type="InterPro" id="IPR000490">
    <property type="entry name" value="Glyco_hydro_17"/>
</dbReference>
<dbReference type="InterPro" id="IPR017853">
    <property type="entry name" value="Glycoside_hydrolase_SF"/>
</dbReference>
<dbReference type="PANTHER" id="PTHR16631:SF14">
    <property type="entry name" value="FAMILY 17 GLUCOSIDASE SCW10-RELATED"/>
    <property type="match status" value="1"/>
</dbReference>
<dbReference type="PANTHER" id="PTHR16631">
    <property type="entry name" value="GLUCAN 1,3-BETA-GLUCOSIDASE"/>
    <property type="match status" value="1"/>
</dbReference>
<dbReference type="Pfam" id="PF00332">
    <property type="entry name" value="Glyco_hydro_17"/>
    <property type="match status" value="1"/>
</dbReference>
<dbReference type="SUPFAM" id="SSF51445">
    <property type="entry name" value="(Trans)glycosidases"/>
    <property type="match status" value="1"/>
</dbReference>
<dbReference type="PROSITE" id="PS00587">
    <property type="entry name" value="GLYCOSYL_HYDROL_F17"/>
    <property type="match status" value="1"/>
</dbReference>
<name>MP65_CANAL</name>
<organism>
    <name type="scientific">Candida albicans (strain SC5314 / ATCC MYA-2876)</name>
    <name type="common">Yeast</name>
    <dbReference type="NCBI Taxonomy" id="237561"/>
    <lineage>
        <taxon>Eukaryota</taxon>
        <taxon>Fungi</taxon>
        <taxon>Dikarya</taxon>
        <taxon>Ascomycota</taxon>
        <taxon>Saccharomycotina</taxon>
        <taxon>Pichiomycetes</taxon>
        <taxon>Debaryomycetaceae</taxon>
        <taxon>Candida/Lodderomyces clade</taxon>
        <taxon>Candida</taxon>
    </lineage>
</organism>
<keyword id="KW-0130">Cell adhesion</keyword>
<keyword id="KW-0134">Cell wall</keyword>
<keyword id="KW-0961">Cell wall biogenesis/degradation</keyword>
<keyword id="KW-0903">Direct protein sequencing</keyword>
<keyword id="KW-0325">Glycoprotein</keyword>
<keyword id="KW-0326">Glycosidase</keyword>
<keyword id="KW-0378">Hydrolase</keyword>
<keyword id="KW-1185">Reference proteome</keyword>
<keyword id="KW-0964">Secreted</keyword>
<keyword id="KW-0732">Signal</keyword>
<keyword id="KW-0843">Virulence</keyword>
<evidence type="ECO:0000250" key="1">
    <source>
        <dbReference type="UniProtKB" id="O22317"/>
    </source>
</evidence>
<evidence type="ECO:0000256" key="2">
    <source>
        <dbReference type="SAM" id="MobiDB-lite"/>
    </source>
</evidence>
<evidence type="ECO:0000269" key="3">
    <source>
    </source>
</evidence>
<evidence type="ECO:0000269" key="4">
    <source>
    </source>
</evidence>
<evidence type="ECO:0000269" key="5">
    <source>
    </source>
</evidence>
<evidence type="ECO:0000269" key="6">
    <source>
    </source>
</evidence>
<evidence type="ECO:0000269" key="7">
    <source>
    </source>
</evidence>
<evidence type="ECO:0000269" key="8">
    <source>
    </source>
</evidence>
<evidence type="ECO:0000269" key="9">
    <source>
    </source>
</evidence>
<evidence type="ECO:0000269" key="10">
    <source>
    </source>
</evidence>
<evidence type="ECO:0000269" key="11">
    <source>
    </source>
</evidence>
<evidence type="ECO:0000305" key="12"/>
<gene>
    <name type="primary">MP65</name>
    <name type="synonym">CMP65</name>
    <name type="synonym">SCW1</name>
    <name type="synonym">SCW10</name>
    <name type="ordered locus">CAALFM_C210030CA</name>
    <name type="ORF">CaO19.1779</name>
    <name type="ORF">CaO19.9345</name>
</gene>
<accession>Q59XX2</accession>
<accession>A0A1D8PIN3</accession>
<accession>Q59XS9</accession>
<protein>
    <recommendedName>
        <fullName>Cell surface mannoprotein MP65</fullName>
        <ecNumber>3.2.1.-</ecNumber>
    </recommendedName>
    <alternativeName>
        <fullName>Mannoprotein of 65 kDa</fullName>
    </alternativeName>
    <alternativeName>
        <fullName>Soluble cell wall protein 10</fullName>
    </alternativeName>
</protein>
<feature type="signal peptide" evidence="11">
    <location>
        <begin position="1"/>
        <end position="32"/>
    </location>
</feature>
<feature type="chain" id="PRO_0000426722" description="Cell surface mannoprotein MP65">
    <location>
        <begin position="33"/>
        <end position="378"/>
    </location>
</feature>
<feature type="region of interest" description="Disordered" evidence="2">
    <location>
        <begin position="67"/>
        <end position="124"/>
    </location>
</feature>
<feature type="compositionally biased region" description="Polar residues" evidence="2">
    <location>
        <begin position="72"/>
        <end position="93"/>
    </location>
</feature>
<feature type="compositionally biased region" description="Low complexity" evidence="2">
    <location>
        <begin position="94"/>
        <end position="116"/>
    </location>
</feature>
<feature type="active site" description="Nucleophile" evidence="1">
    <location>
        <position position="316"/>
    </location>
</feature>
<proteinExistence type="evidence at protein level"/>
<reference key="1">
    <citation type="journal article" date="2004" name="Proc. Natl. Acad. Sci. U.S.A.">
        <title>The diploid genome sequence of Candida albicans.</title>
        <authorList>
            <person name="Jones T."/>
            <person name="Federspiel N.A."/>
            <person name="Chibana H."/>
            <person name="Dungan J."/>
            <person name="Kalman S."/>
            <person name="Magee B.B."/>
            <person name="Newport G."/>
            <person name="Thorstenson Y.R."/>
            <person name="Agabian N."/>
            <person name="Magee P.T."/>
            <person name="Davis R.W."/>
            <person name="Scherer S."/>
        </authorList>
    </citation>
    <scope>NUCLEOTIDE SEQUENCE [LARGE SCALE GENOMIC DNA]</scope>
    <source>
        <strain>SC5314 / ATCC MYA-2876</strain>
    </source>
</reference>
<reference key="2">
    <citation type="journal article" date="2007" name="Genome Biol.">
        <title>Assembly of the Candida albicans genome into sixteen supercontigs aligned on the eight chromosomes.</title>
        <authorList>
            <person name="van het Hoog M."/>
            <person name="Rast T.J."/>
            <person name="Martchenko M."/>
            <person name="Grindle S."/>
            <person name="Dignard D."/>
            <person name="Hogues H."/>
            <person name="Cuomo C."/>
            <person name="Berriman M."/>
            <person name="Scherer S."/>
            <person name="Magee B.B."/>
            <person name="Whiteway M."/>
            <person name="Chibana H."/>
            <person name="Nantel A."/>
            <person name="Magee P.T."/>
        </authorList>
    </citation>
    <scope>GENOME REANNOTATION</scope>
    <source>
        <strain>SC5314 / ATCC MYA-2876</strain>
    </source>
</reference>
<reference key="3">
    <citation type="journal article" date="2013" name="Genome Biol.">
        <title>Assembly of a phased diploid Candida albicans genome facilitates allele-specific measurements and provides a simple model for repeat and indel structure.</title>
        <authorList>
            <person name="Muzzey D."/>
            <person name="Schwartz K."/>
            <person name="Weissman J.S."/>
            <person name="Sherlock G."/>
        </authorList>
    </citation>
    <scope>NUCLEOTIDE SEQUENCE [LARGE SCALE GENOMIC DNA]</scope>
    <scope>GENOME REANNOTATION</scope>
    <source>
        <strain>SC5314 / ATCC MYA-2876</strain>
    </source>
</reference>
<reference key="4">
    <citation type="journal article" date="1996" name="Infect. Immun.">
        <title>Purification and biochemical characterization of a 65-kilodalton mannoprotein (MP65), a main target of anti-Candida cell-mediated immune responses in humans.</title>
        <authorList>
            <person name="Gomez M.J."/>
            <person name="Torosantucci A."/>
            <person name="Arancia S."/>
            <person name="Maras B."/>
            <person name="Parisi L."/>
            <person name="Cassone A."/>
        </authorList>
    </citation>
    <scope>PROTEIN SEQUENCE OF 33-45</scope>
    <scope>SUBCELLULAR LOCATION</scope>
    <scope>GLYCOSYLATION</scope>
    <scope>IMMUNOLOGICAL ACTIVITY</scope>
</reference>
<reference key="5">
    <citation type="journal article" date="1993" name="J. Infect. Dis.">
        <title>Identification of a 65-kDa mannoprotein as a main target of human cell-mediated immune response to Candida albicans.</title>
        <authorList>
            <person name="Torosantucci A."/>
            <person name="Bromuro C."/>
            <person name="Gomez M.J."/>
            <person name="Ausiello C.M."/>
            <person name="Urbani F."/>
            <person name="Cassone A."/>
        </authorList>
    </citation>
    <scope>IDENTIFICATION AS A DOMINANT ANTIGEN</scope>
</reference>
<reference key="6">
    <citation type="journal article" date="1994" name="J. Med. Vet. Mycol.">
        <title>Differential release of an immunodominant 65 kDa mannoprotein antigen from yeast and mycelial forms of Candida albicans.</title>
        <authorList>
            <person name="Bromuro C."/>
            <person name="Torosantucci A."/>
            <person name="Gomez M.J."/>
            <person name="Urbani F."/>
            <person name="Cassone A."/>
        </authorList>
    </citation>
    <scope>INDUCTION</scope>
</reference>
<reference key="7">
    <citation type="journal article" date="2000" name="Infect. Immun.">
        <title>Generation of a recombinant 65-kilodalton mannoprotein, a major antigen target of cell-mediated immune response to Candida albicans.</title>
        <authorList>
            <person name="La Valle R."/>
            <person name="Sandini S."/>
            <person name="Gomez M.J."/>
            <person name="Mondello F."/>
            <person name="Romagnoli G."/>
            <person name="Nisini R."/>
            <person name="Cassone A."/>
        </authorList>
    </citation>
    <scope>IDENTIFICATION AS A DOMINANT ANTIGEN</scope>
</reference>
<reference key="8">
    <citation type="journal article" date="2001" name="Infect. Immun.">
        <title>Antigenic properties and processing requirements of 65-kilodalton mannoprotein, a major antigen target of anti-Candida human T-cell response, as disclosed by specific human T-cell clones.</title>
        <authorList>
            <person name="Nisini R."/>
            <person name="Romagnoli G."/>
            <person name="Gomez M.J."/>
            <person name="La Valle R."/>
            <person name="Torosantucci A."/>
            <person name="Mariotti S."/>
            <person name="Teloni R."/>
            <person name="Cassone A."/>
        </authorList>
    </citation>
    <scope>IDENTIFICATION AS AN ANTIGEN</scope>
</reference>
<reference key="9">
    <citation type="journal article" date="2004" name="Eukaryot. Cell">
        <title>Proteomic analysis of Candida albicans cell walls reveals covalently bound carbohydrate-active enzymes and adhesins.</title>
        <authorList>
            <person name="de Groot P.W."/>
            <person name="de Boer A.D."/>
            <person name="Cunningham J."/>
            <person name="Dekker H.L."/>
            <person name="de Jong L."/>
            <person name="Hellingwerf K.J."/>
            <person name="de Koster C."/>
            <person name="Klis F.M."/>
        </authorList>
    </citation>
    <scope>IDENTIFICATION BY MASS SPECTROMETRY</scope>
    <scope>SUBCELLULAR LOCATION</scope>
</reference>
<reference key="10">
    <citation type="journal article" date="2006" name="Fungal Genet. Biol.">
        <title>Genomic response programs of Candida albicans following protoplasting and regeneration.</title>
        <authorList>
            <person name="Castillo L."/>
            <person name="Martinez A.I."/>
            <person name="Garcera A."/>
            <person name="Garcia-Martinez J."/>
            <person name="Ruiz-Herrera J."/>
            <person name="Valentin E."/>
            <person name="Sentandreu R."/>
        </authorList>
    </citation>
    <scope>INDUCTION</scope>
</reference>
<reference key="11">
    <citation type="journal article" date="2006" name="Mol. Cell. Probes">
        <title>Use of 65 kDa mannoprotein gene primers in Real Time PCR identification of Candida albicans in biological samples.</title>
        <authorList>
            <person name="Arancia S."/>
            <person name="Carattoli A."/>
            <person name="La Valle R."/>
            <person name="Cassone A."/>
            <person name="De Bernardis F."/>
        </authorList>
    </citation>
    <scope>DIAGNOSTIC TOOL</scope>
</reference>
<reference key="12">
    <citation type="journal article" date="2007" name="Eukaryot. Cell">
        <title>Candida albicans Sun41p, a putative glycosidase, is involved in morphogenesis, cell wall biogenesis, and biofilm formation.</title>
        <authorList>
            <person name="Hiller E."/>
            <person name="Heine S."/>
            <person name="Brunner H."/>
            <person name="Rupp S."/>
        </authorList>
    </citation>
    <scope>IDENTIFICATION BY MASS SPECTROMETRY</scope>
    <scope>SUBCELLULAR LOCATION</scope>
</reference>
<reference key="13">
    <citation type="journal article" date="2007" name="Cell. Microbiol.">
        <title>The 65 kDa mannoprotein gene of Candida albicans encodes a putative beta-glucanase adhesin required for hyphal morphogenesis and experimental pathogenicity.</title>
        <authorList>
            <person name="Sandini S."/>
            <person name="La Valle R."/>
            <person name="De Bernardis F."/>
            <person name="Macri C."/>
            <person name="Cassone A."/>
        </authorList>
    </citation>
    <scope>FUNCTION</scope>
    <scope>DISRUPTION PHENOTYPE</scope>
</reference>
<reference key="14">
    <citation type="journal article" date="2007" name="J. Immunol.">
        <title>Identification of pH-regulated antigen 1 released from Candida albicans as the major ligand for leukocyte integrin alphaMbeta2.</title>
        <authorList>
            <person name="Soloviev D.A."/>
            <person name="Fonzi W.A."/>
            <person name="Sentandreu R."/>
            <person name="Pluskota E."/>
            <person name="Forsyth C.B."/>
            <person name="Yadav S."/>
            <person name="Plow E.F."/>
        </authorList>
    </citation>
    <scope>IDENTIFICATION BY MASS SPECTROMETRY</scope>
    <scope>SUBCELLULAR LOCATION</scope>
    <scope>IDENTIFICATION IN A COMPLEX WITH PRA1 AND HYR1</scope>
</reference>
<reference key="15">
    <citation type="journal article" date="2008" name="Infect. Immun.">
        <title>A Candida albicans mannoprotein deprived of its mannan moiety is efficiently taken up and processed by human dendritic cells and induces T-cell activation without stimulating proinflammatory cytokine production.</title>
        <authorList>
            <person name="Pietrella D."/>
            <person name="Lupo P."/>
            <person name="Rachini A."/>
            <person name="Sandini S."/>
            <person name="Ciervo A."/>
            <person name="Perito S."/>
            <person name="Bistoni F."/>
            <person name="Vecchiarelli A."/>
        </authorList>
    </citation>
    <scope>IDENTIFICATION AS AN ANTIGEN</scope>
</reference>
<reference key="16">
    <citation type="journal article" date="2009" name="J. Antimicrob. Chemother.">
        <title>Effect of tunicamycin on Candida albicans biofilm formation and maintenance.</title>
        <authorList>
            <person name="Pierce C.G."/>
            <person name="Thomas D.P."/>
            <person name="Lopez-Ribot J.L."/>
        </authorList>
    </citation>
    <scope>SUBCELLULAR LOCATION</scope>
    <scope>GLYCOSYLATION</scope>
</reference>
<reference key="17">
    <citation type="journal article" date="2011" name="Eukaryot. Cell">
        <title>Effects of fluconazole on the secretome, the wall proteome, and wall integrity of the clinical fungus Candida albicans.</title>
        <authorList>
            <person name="Sorgo A.G."/>
            <person name="Heilmann C.J."/>
            <person name="Dekker H.L."/>
            <person name="Bekker M."/>
            <person name="Brul S."/>
            <person name="de Koster C.G."/>
            <person name="de Koning L.J."/>
            <person name="Klis F.M."/>
        </authorList>
    </citation>
    <scope>IDENTIFICATION BY MASS SPECTROMETRY</scope>
    <scope>INDUCTION</scope>
    <scope>SUBCELLULAR LOCATION</scope>
</reference>
<comment type="function">
    <text evidence="5">Surface mannoprotein required for hyphal morphogenesis, surface adherence, and pathogenicity. Contributes in a high proportion to the carbohydrate component of the matrix due to high levels of glycosylation and may play important roles during biofilm development and maintenance. Acts as a major antigen target of host cell-mediated immune response. Induces extensive T-cell proliferation of human peripheral blood mononuclear cells. Facilitates host dendritic cells maturation and promotes cytokine production through its glycosylated portion while its protein core is essentially involved in induction of T-cell response.</text>
</comment>
<comment type="subunit">
    <text evidence="6">Component of a multiprotein complex of 250 kDa composed of at least HYR1, MP65, and PRA1.</text>
</comment>
<comment type="subcellular location">
    <subcellularLocation>
        <location evidence="3 6 7 8 9 11">Secreted</location>
        <location evidence="3 6 7 8 9 11">Cell wall</location>
    </subcellularLocation>
</comment>
<comment type="induction">
    <text evidence="4 9 10">Expressed predominantly by the mycelial cells. Also induced during cell wall regeneration and biofilm formation. Repressed by fluconazole.</text>
</comment>
<comment type="PTM">
    <text evidence="8">Glycosylated protein with a polysaccharide moiety composed exclusively of mannose and glucose at a ratio of 12.7 to 1. Contributes highly to the carbohydrate component of the matrix. Treatment with tunicamycin impairs glycosylation.</text>
</comment>
<comment type="disruption phenotype">
    <text evidence="5">Impairs germ tube formation and suppresses hyphal formation. Also decreases pathogenicity and adherence to polystyrene plates.</text>
</comment>
<comment type="miscellaneous">
    <text>The presence of the MP65 gene can be used as a diagnostic marker to distinguish C.albicans from other yeast or Candida species by PCR.</text>
</comment>
<comment type="similarity">
    <text evidence="12">Belongs to the glycosyl hydrolase 17 family.</text>
</comment>